<name>YMDB_SALTY</name>
<evidence type="ECO:0000255" key="1">
    <source>
        <dbReference type="HAMAP-Rule" id="MF_01205"/>
    </source>
</evidence>
<dbReference type="EC" id="3.1.1.106" evidence="1"/>
<dbReference type="EMBL" id="AE006468">
    <property type="protein sequence ID" value="AAL20077.1"/>
    <property type="molecule type" value="Genomic_DNA"/>
</dbReference>
<dbReference type="RefSeq" id="NP_460118.1">
    <property type="nucleotide sequence ID" value="NC_003197.2"/>
</dbReference>
<dbReference type="RefSeq" id="WP_000203944.1">
    <property type="nucleotide sequence ID" value="NC_003197.2"/>
</dbReference>
<dbReference type="SMR" id="P67341"/>
<dbReference type="STRING" id="99287.STM1147"/>
<dbReference type="PaxDb" id="99287-STM1147"/>
<dbReference type="GeneID" id="1252665"/>
<dbReference type="KEGG" id="stm:STM1147"/>
<dbReference type="PATRIC" id="fig|99287.12.peg.1214"/>
<dbReference type="HOGENOM" id="CLU_046550_5_1_6"/>
<dbReference type="OMA" id="AKWVIHT"/>
<dbReference type="PhylomeDB" id="P67341"/>
<dbReference type="BioCyc" id="SENT99287:STM1147-MONOMER"/>
<dbReference type="Proteomes" id="UP000001014">
    <property type="component" value="Chromosome"/>
</dbReference>
<dbReference type="GO" id="GO:0061463">
    <property type="term" value="F:O-acetyl-ADP-ribose deacetylase activity"/>
    <property type="evidence" value="ECO:0000318"/>
    <property type="project" value="GO_Central"/>
</dbReference>
<dbReference type="GO" id="GO:0001883">
    <property type="term" value="F:purine nucleoside binding"/>
    <property type="evidence" value="ECO:0007669"/>
    <property type="project" value="UniProtKB-UniRule"/>
</dbReference>
<dbReference type="GO" id="GO:0008428">
    <property type="term" value="F:ribonuclease inhibitor activity"/>
    <property type="evidence" value="ECO:0007669"/>
    <property type="project" value="UniProtKB-UniRule"/>
</dbReference>
<dbReference type="GO" id="GO:0042278">
    <property type="term" value="P:purine nucleoside metabolic process"/>
    <property type="evidence" value="ECO:0007669"/>
    <property type="project" value="UniProtKB-UniRule"/>
</dbReference>
<dbReference type="CDD" id="cd02908">
    <property type="entry name" value="Macro_OAADPr_deacetylase"/>
    <property type="match status" value="1"/>
</dbReference>
<dbReference type="Gene3D" id="3.40.220.10">
    <property type="entry name" value="Leucine Aminopeptidase, subunit E, domain 1"/>
    <property type="match status" value="1"/>
</dbReference>
<dbReference type="HAMAP" id="MF_01205">
    <property type="entry name" value="YmdB"/>
    <property type="match status" value="1"/>
</dbReference>
<dbReference type="InterPro" id="IPR002589">
    <property type="entry name" value="Macro_dom"/>
</dbReference>
<dbReference type="InterPro" id="IPR043472">
    <property type="entry name" value="Macro_dom-like"/>
</dbReference>
<dbReference type="InterPro" id="IPR024900">
    <property type="entry name" value="O-Ac-ADP-ribose_deAcase"/>
</dbReference>
<dbReference type="NCBIfam" id="NF001660">
    <property type="entry name" value="PRK00431.1-1"/>
    <property type="match status" value="1"/>
</dbReference>
<dbReference type="NCBIfam" id="NF001664">
    <property type="entry name" value="PRK00431.1-6"/>
    <property type="match status" value="1"/>
</dbReference>
<dbReference type="PANTHER" id="PTHR11106">
    <property type="entry name" value="GANGLIOSIDE INDUCED DIFFERENTIATION ASSOCIATED PROTEIN 2-RELATED"/>
    <property type="match status" value="1"/>
</dbReference>
<dbReference type="PANTHER" id="PTHR11106:SF27">
    <property type="entry name" value="MACRO DOMAIN-CONTAINING PROTEIN"/>
    <property type="match status" value="1"/>
</dbReference>
<dbReference type="Pfam" id="PF01661">
    <property type="entry name" value="Macro"/>
    <property type="match status" value="1"/>
</dbReference>
<dbReference type="SMART" id="SM00506">
    <property type="entry name" value="A1pp"/>
    <property type="match status" value="1"/>
</dbReference>
<dbReference type="SUPFAM" id="SSF52949">
    <property type="entry name" value="Macro domain-like"/>
    <property type="match status" value="1"/>
</dbReference>
<dbReference type="PROSITE" id="PS51154">
    <property type="entry name" value="MACRO"/>
    <property type="match status" value="1"/>
</dbReference>
<accession>P67341</accession>
<accession>Q8Z7M1</accession>
<accession>Q8ZQ29</accession>
<organism>
    <name type="scientific">Salmonella typhimurium (strain LT2 / SGSC1412 / ATCC 700720)</name>
    <dbReference type="NCBI Taxonomy" id="99287"/>
    <lineage>
        <taxon>Bacteria</taxon>
        <taxon>Pseudomonadati</taxon>
        <taxon>Pseudomonadota</taxon>
        <taxon>Gammaproteobacteria</taxon>
        <taxon>Enterobacterales</taxon>
        <taxon>Enterobacteriaceae</taxon>
        <taxon>Salmonella</taxon>
    </lineage>
</organism>
<protein>
    <recommendedName>
        <fullName evidence="1">O-acetyl-ADP-ribose deacetylase</fullName>
        <ecNumber evidence="1">3.1.1.106</ecNumber>
    </recommendedName>
    <alternativeName>
        <fullName evidence="1">Regulator of RNase III activity</fullName>
    </alternativeName>
</protein>
<reference key="1">
    <citation type="journal article" date="2001" name="Nature">
        <title>Complete genome sequence of Salmonella enterica serovar Typhimurium LT2.</title>
        <authorList>
            <person name="McClelland M."/>
            <person name="Sanderson K.E."/>
            <person name="Spieth J."/>
            <person name="Clifton S.W."/>
            <person name="Latreille P."/>
            <person name="Courtney L."/>
            <person name="Porwollik S."/>
            <person name="Ali J."/>
            <person name="Dante M."/>
            <person name="Du F."/>
            <person name="Hou S."/>
            <person name="Layman D."/>
            <person name="Leonard S."/>
            <person name="Nguyen C."/>
            <person name="Scott K."/>
            <person name="Holmes A."/>
            <person name="Grewal N."/>
            <person name="Mulvaney E."/>
            <person name="Ryan E."/>
            <person name="Sun H."/>
            <person name="Florea L."/>
            <person name="Miller W."/>
            <person name="Stoneking T."/>
            <person name="Nhan M."/>
            <person name="Waterston R."/>
            <person name="Wilson R.K."/>
        </authorList>
    </citation>
    <scope>NUCLEOTIDE SEQUENCE [LARGE SCALE GENOMIC DNA]</scope>
    <source>
        <strain>LT2 / SGSC1412 / ATCC 700720</strain>
    </source>
</reference>
<sequence length="179" mass="19196">MTSRLQVIQGDITQLSVDAIVNAANASLMGGGGVDGAIHRAAGPALLDACKLIRQQQGECQTGHAVITPAGKLSAKAVIHTVGPVWRGGEHQEAELLEEAYRNCLLLAEANHFRSIAFPAISTGVYGYPRAQAAEVAVRTVSDFITRYALPEQVYFVCYDEETARLYARLLTQQGDDPA</sequence>
<proteinExistence type="inferred from homology"/>
<gene>
    <name evidence="1" type="primary">ymdB</name>
    <name type="ordered locus">STM1147</name>
</gene>
<comment type="function">
    <text evidence="1">Deacetylates O-acetyl-ADP ribose to yield ADP-ribose and free acetate. Down-regulates ribonuclease 3 (RNase III) activity. Acts by interacting directly with the region of the ribonuclease that is required for dimerization/activation.</text>
</comment>
<comment type="catalytic activity">
    <reaction evidence="1">
        <text>3''-O-acetyl-ADP-D-ribose + H2O = ADP-D-ribose + acetate + H(+)</text>
        <dbReference type="Rhea" id="RHEA:59244"/>
        <dbReference type="ChEBI" id="CHEBI:15377"/>
        <dbReference type="ChEBI" id="CHEBI:15378"/>
        <dbReference type="ChEBI" id="CHEBI:30089"/>
        <dbReference type="ChEBI" id="CHEBI:57967"/>
        <dbReference type="ChEBI" id="CHEBI:142723"/>
        <dbReference type="EC" id="3.1.1.106"/>
    </reaction>
</comment>
<comment type="catalytic activity">
    <reaction evidence="1">
        <text>2''-O-acetyl-ADP-D-ribose + H2O = ADP-D-ribose + acetate + H(+)</text>
        <dbReference type="Rhea" id="RHEA:57060"/>
        <dbReference type="ChEBI" id="CHEBI:15377"/>
        <dbReference type="ChEBI" id="CHEBI:15378"/>
        <dbReference type="ChEBI" id="CHEBI:30089"/>
        <dbReference type="ChEBI" id="CHEBI:57967"/>
        <dbReference type="ChEBI" id="CHEBI:83767"/>
        <dbReference type="EC" id="3.1.1.106"/>
    </reaction>
</comment>
<comment type="subunit">
    <text evidence="1">Homodimer. Interacts with RNase III.</text>
</comment>
<comment type="similarity">
    <text evidence="1">Belongs to the MacroD-type family. YmdB subfamily.</text>
</comment>
<feature type="chain" id="PRO_0000089206" description="O-acetyl-ADP-ribose deacetylase">
    <location>
        <begin position="1"/>
        <end position="179"/>
    </location>
</feature>
<feature type="domain" description="Macro" evidence="1">
    <location>
        <begin position="1"/>
        <end position="175"/>
    </location>
</feature>
<feature type="active site" description="Proton acceptor" evidence="1">
    <location>
        <position position="35"/>
    </location>
</feature>
<feature type="binding site" evidence="1">
    <location>
        <begin position="11"/>
        <end position="12"/>
    </location>
    <ligand>
        <name>substrate</name>
    </ligand>
</feature>
<feature type="binding site" evidence="1">
    <location>
        <position position="25"/>
    </location>
    <ligand>
        <name>substrate</name>
    </ligand>
</feature>
<feature type="binding site" evidence="1">
    <location>
        <begin position="33"/>
        <end position="35"/>
    </location>
    <ligand>
        <name>substrate</name>
    </ligand>
</feature>
<feature type="binding site" evidence="1">
    <location>
        <begin position="122"/>
        <end position="126"/>
    </location>
    <ligand>
        <name>substrate</name>
    </ligand>
</feature>
<keyword id="KW-0378">Hydrolase</keyword>
<keyword id="KW-1185">Reference proteome</keyword>